<sequence>MSIQPSITAAPARSLHFAEVLMARESITPVDAGCQSYLMYKLEKLGFVCERHTINGVKNLIAKWGGGPLHFAFSGHTDVVPPGPLEKWKSPPFSPVVSQNKLYGRGAADMKTGISAMLAATERAIASLDEREVTYWWLITSDEEGEAEWGSKWINEYLTKRNVQLDMCLVGEPSATTQTGDTIKVGRRGSLSGTITVAGKQGHVAYPKTAVNAIHKASNIVNALTHYPFEEGSDDFPGTTLQITHMDTGSFTDNIVPSAVRIEFNVRYSWQYNQGSLAELLRQIISSVDMSALVSFSRPCEAYLSKPHNNAKRCLITSVEKAIKAATGRYPVISTSGGTSDGRFYASEKTQVVEVGVPNATIHQVNEHIHLSDLLTLEDIYTDILLSLSK</sequence>
<evidence type="ECO:0000255" key="1">
    <source>
        <dbReference type="HAMAP-Rule" id="MF_01690"/>
    </source>
</evidence>
<evidence type="ECO:0000312" key="2">
    <source>
        <dbReference type="EMBL" id="AEA98678.2"/>
    </source>
</evidence>
<keyword id="KW-0028">Amino-acid biosynthesis</keyword>
<keyword id="KW-0170">Cobalt</keyword>
<keyword id="KW-0220">Diaminopimelate biosynthesis</keyword>
<keyword id="KW-0378">Hydrolase</keyword>
<keyword id="KW-0457">Lysine biosynthesis</keyword>
<keyword id="KW-0479">Metal-binding</keyword>
<keyword id="KW-0862">Zinc</keyword>
<dbReference type="EC" id="3.5.1.18" evidence="1"/>
<dbReference type="EMBL" id="CP001103">
    <property type="protein sequence ID" value="AEA98678.2"/>
    <property type="molecule type" value="Genomic_DNA"/>
</dbReference>
<dbReference type="RefSeq" id="WP_012518580.1">
    <property type="nucleotide sequence ID" value="NC_011138.3"/>
</dbReference>
<dbReference type="SMR" id="B4RZS0"/>
<dbReference type="KEGG" id="amc:MADE_1012720"/>
<dbReference type="HOGENOM" id="CLU_021802_4_0_6"/>
<dbReference type="UniPathway" id="UPA00034">
    <property type="reaction ID" value="UER00021"/>
</dbReference>
<dbReference type="Proteomes" id="UP000001870">
    <property type="component" value="Chromosome"/>
</dbReference>
<dbReference type="GO" id="GO:0008777">
    <property type="term" value="F:acetylornithine deacetylase activity"/>
    <property type="evidence" value="ECO:0007669"/>
    <property type="project" value="TreeGrafter"/>
</dbReference>
<dbReference type="GO" id="GO:0050897">
    <property type="term" value="F:cobalt ion binding"/>
    <property type="evidence" value="ECO:0007669"/>
    <property type="project" value="UniProtKB-UniRule"/>
</dbReference>
<dbReference type="GO" id="GO:0009014">
    <property type="term" value="F:succinyl-diaminopimelate desuccinylase activity"/>
    <property type="evidence" value="ECO:0007669"/>
    <property type="project" value="UniProtKB-UniRule"/>
</dbReference>
<dbReference type="GO" id="GO:0008270">
    <property type="term" value="F:zinc ion binding"/>
    <property type="evidence" value="ECO:0007669"/>
    <property type="project" value="UniProtKB-UniRule"/>
</dbReference>
<dbReference type="GO" id="GO:0019877">
    <property type="term" value="P:diaminopimelate biosynthetic process"/>
    <property type="evidence" value="ECO:0007669"/>
    <property type="project" value="UniProtKB-UniRule"/>
</dbReference>
<dbReference type="GO" id="GO:0006526">
    <property type="term" value="P:L-arginine biosynthetic process"/>
    <property type="evidence" value="ECO:0007669"/>
    <property type="project" value="TreeGrafter"/>
</dbReference>
<dbReference type="GO" id="GO:0009089">
    <property type="term" value="P:lysine biosynthetic process via diaminopimelate"/>
    <property type="evidence" value="ECO:0007669"/>
    <property type="project" value="UniProtKB-UniRule"/>
</dbReference>
<dbReference type="CDD" id="cd03891">
    <property type="entry name" value="M20_DapE_proteobac"/>
    <property type="match status" value="1"/>
</dbReference>
<dbReference type="Gene3D" id="3.30.70.360">
    <property type="match status" value="1"/>
</dbReference>
<dbReference type="Gene3D" id="3.40.630.10">
    <property type="entry name" value="Zn peptidases"/>
    <property type="match status" value="2"/>
</dbReference>
<dbReference type="HAMAP" id="MF_01690">
    <property type="entry name" value="DapE"/>
    <property type="match status" value="1"/>
</dbReference>
<dbReference type="InterPro" id="IPR036264">
    <property type="entry name" value="Bact_exopeptidase_dim_dom"/>
</dbReference>
<dbReference type="InterPro" id="IPR005941">
    <property type="entry name" value="DapE_proteobac"/>
</dbReference>
<dbReference type="InterPro" id="IPR002933">
    <property type="entry name" value="Peptidase_M20"/>
</dbReference>
<dbReference type="InterPro" id="IPR011650">
    <property type="entry name" value="Peptidase_M20_dimer"/>
</dbReference>
<dbReference type="InterPro" id="IPR050072">
    <property type="entry name" value="Peptidase_M20A"/>
</dbReference>
<dbReference type="NCBIfam" id="TIGR01246">
    <property type="entry name" value="dapE_proteo"/>
    <property type="match status" value="1"/>
</dbReference>
<dbReference type="NCBIfam" id="NF009557">
    <property type="entry name" value="PRK13009.1"/>
    <property type="match status" value="1"/>
</dbReference>
<dbReference type="PANTHER" id="PTHR43808">
    <property type="entry name" value="ACETYLORNITHINE DEACETYLASE"/>
    <property type="match status" value="1"/>
</dbReference>
<dbReference type="PANTHER" id="PTHR43808:SF31">
    <property type="entry name" value="N-ACETYL-L-CITRULLINE DEACETYLASE"/>
    <property type="match status" value="1"/>
</dbReference>
<dbReference type="Pfam" id="PF07687">
    <property type="entry name" value="M20_dimer"/>
    <property type="match status" value="1"/>
</dbReference>
<dbReference type="Pfam" id="PF01546">
    <property type="entry name" value="Peptidase_M20"/>
    <property type="match status" value="1"/>
</dbReference>
<dbReference type="SUPFAM" id="SSF55031">
    <property type="entry name" value="Bacterial exopeptidase dimerisation domain"/>
    <property type="match status" value="1"/>
</dbReference>
<dbReference type="SUPFAM" id="SSF53187">
    <property type="entry name" value="Zn-dependent exopeptidases"/>
    <property type="match status" value="1"/>
</dbReference>
<gene>
    <name evidence="1" type="primary">dapE1</name>
    <name evidence="2" type="ordered locus">MADE_1012720</name>
    <name type="ORF">MADE_1010595</name>
</gene>
<proteinExistence type="inferred from homology"/>
<feature type="chain" id="PRO_0000375461" description="Succinyl-diaminopimelate desuccinylase 1">
    <location>
        <begin position="1"/>
        <end position="390"/>
    </location>
</feature>
<feature type="active site" evidence="1">
    <location>
        <position position="78"/>
    </location>
</feature>
<feature type="active site" description="Proton acceptor" evidence="1">
    <location>
        <position position="143"/>
    </location>
</feature>
<feature type="binding site" evidence="1">
    <location>
        <position position="76"/>
    </location>
    <ligand>
        <name>Zn(2+)</name>
        <dbReference type="ChEBI" id="CHEBI:29105"/>
        <label>1</label>
    </ligand>
</feature>
<feature type="binding site" evidence="1">
    <location>
        <position position="109"/>
    </location>
    <ligand>
        <name>Zn(2+)</name>
        <dbReference type="ChEBI" id="CHEBI:29105"/>
        <label>1</label>
    </ligand>
</feature>
<feature type="binding site" evidence="1">
    <location>
        <position position="109"/>
    </location>
    <ligand>
        <name>Zn(2+)</name>
        <dbReference type="ChEBI" id="CHEBI:29105"/>
        <label>2</label>
    </ligand>
</feature>
<feature type="binding site" evidence="1">
    <location>
        <position position="144"/>
    </location>
    <ligand>
        <name>Zn(2+)</name>
        <dbReference type="ChEBI" id="CHEBI:29105"/>
        <label>2</label>
    </ligand>
</feature>
<feature type="binding site" evidence="1">
    <location>
        <position position="172"/>
    </location>
    <ligand>
        <name>Zn(2+)</name>
        <dbReference type="ChEBI" id="CHEBI:29105"/>
        <label>1</label>
    </ligand>
</feature>
<feature type="binding site" evidence="1">
    <location>
        <position position="363"/>
    </location>
    <ligand>
        <name>Zn(2+)</name>
        <dbReference type="ChEBI" id="CHEBI:29105"/>
        <label>2</label>
    </ligand>
</feature>
<reference key="1">
    <citation type="journal article" date="2008" name="ISME J.">
        <title>Comparative genomics of two ecotypes of the marine planktonic copiotroph Alteromonas macleodii suggests alternative lifestyles associated with different kinds of particulate organic matter.</title>
        <authorList>
            <person name="Ivars-Martinez E."/>
            <person name="Martin-Cuadrado A.-B."/>
            <person name="D'Auria G."/>
            <person name="Mira A."/>
            <person name="Ferriera S."/>
            <person name="Johnson J."/>
            <person name="Friedman R."/>
            <person name="Rodriguez-Valera F."/>
        </authorList>
    </citation>
    <scope>NUCLEOTIDE SEQUENCE [LARGE SCALE GENOMIC DNA]</scope>
    <source>
        <strain>DSM 17117 / CIP 110805 / LMG 28347 / Deep ecotype</strain>
    </source>
</reference>
<comment type="function">
    <text evidence="1">Catalyzes the hydrolysis of N-succinyl-L,L-diaminopimelic acid (SDAP), forming succinate and LL-2,6-diaminopimelate (DAP), an intermediate involved in the bacterial biosynthesis of lysine and meso-diaminopimelic acid, an essential component of bacterial cell walls.</text>
</comment>
<comment type="catalytic activity">
    <reaction evidence="1">
        <text>N-succinyl-(2S,6S)-2,6-diaminopimelate + H2O = (2S,6S)-2,6-diaminopimelate + succinate</text>
        <dbReference type="Rhea" id="RHEA:22608"/>
        <dbReference type="ChEBI" id="CHEBI:15377"/>
        <dbReference type="ChEBI" id="CHEBI:30031"/>
        <dbReference type="ChEBI" id="CHEBI:57609"/>
        <dbReference type="ChEBI" id="CHEBI:58087"/>
        <dbReference type="EC" id="3.5.1.18"/>
    </reaction>
</comment>
<comment type="cofactor">
    <cofactor evidence="1">
        <name>Zn(2+)</name>
        <dbReference type="ChEBI" id="CHEBI:29105"/>
    </cofactor>
    <cofactor evidence="1">
        <name>Co(2+)</name>
        <dbReference type="ChEBI" id="CHEBI:48828"/>
    </cofactor>
    <text evidence="1">Binds 2 Zn(2+) or Co(2+) ions per subunit.</text>
</comment>
<comment type="pathway">
    <text evidence="1">Amino-acid biosynthesis; L-lysine biosynthesis via DAP pathway; LL-2,6-diaminopimelate from (S)-tetrahydrodipicolinate (succinylase route): step 3/3.</text>
</comment>
<comment type="subunit">
    <text evidence="1">Homodimer.</text>
</comment>
<comment type="similarity">
    <text evidence="1">Belongs to the peptidase M20A family. DapE subfamily.</text>
</comment>
<protein>
    <recommendedName>
        <fullName evidence="1">Succinyl-diaminopimelate desuccinylase 1</fullName>
        <shortName evidence="1">SDAP desuccinylase 1</shortName>
        <ecNumber evidence="1">3.5.1.18</ecNumber>
    </recommendedName>
    <alternativeName>
        <fullName evidence="1">N-succinyl-LL-2,6-diaminoheptanedioate amidohydrolase 1</fullName>
    </alternativeName>
</protein>
<name>DAPE1_ALTMD</name>
<accession>B4RZS0</accession>
<accession>F2G385</accession>
<accession>F2G7S9</accession>
<organism>
    <name type="scientific">Alteromonas mediterranea (strain DSM 17117 / CIP 110805 / LMG 28347 / Deep ecotype)</name>
    <dbReference type="NCBI Taxonomy" id="1774373"/>
    <lineage>
        <taxon>Bacteria</taxon>
        <taxon>Pseudomonadati</taxon>
        <taxon>Pseudomonadota</taxon>
        <taxon>Gammaproteobacteria</taxon>
        <taxon>Alteromonadales</taxon>
        <taxon>Alteromonadaceae</taxon>
        <taxon>Alteromonas/Salinimonas group</taxon>
        <taxon>Alteromonas</taxon>
    </lineage>
</organism>